<comment type="function">
    <text evidence="1">Phosphorolytic 3'-5' exoribonuclease that plays an important role in tRNA 3'-end maturation. Removes nucleotide residues following the 3'-CCA terminus of tRNAs; can also add nucleotides to the ends of RNA molecules by using nucleoside diphosphates as substrates, but this may not be physiologically important. Probably plays a role in initiation of 16S rRNA degradation (leading to ribosome degradation) during starvation.</text>
</comment>
<comment type="catalytic activity">
    <reaction evidence="1">
        <text>tRNA(n+1) + phosphate = tRNA(n) + a ribonucleoside 5'-diphosphate</text>
        <dbReference type="Rhea" id="RHEA:10628"/>
        <dbReference type="Rhea" id="RHEA-COMP:17343"/>
        <dbReference type="Rhea" id="RHEA-COMP:17344"/>
        <dbReference type="ChEBI" id="CHEBI:43474"/>
        <dbReference type="ChEBI" id="CHEBI:57930"/>
        <dbReference type="ChEBI" id="CHEBI:173114"/>
        <dbReference type="EC" id="2.7.7.56"/>
    </reaction>
</comment>
<comment type="subunit">
    <text evidence="1">Homohexameric ring arranged as a trimer of dimers.</text>
</comment>
<comment type="similarity">
    <text evidence="1">Belongs to the RNase PH family.</text>
</comment>
<keyword id="KW-0548">Nucleotidyltransferase</keyword>
<keyword id="KW-1185">Reference proteome</keyword>
<keyword id="KW-0694">RNA-binding</keyword>
<keyword id="KW-0698">rRNA processing</keyword>
<keyword id="KW-0808">Transferase</keyword>
<keyword id="KW-0819">tRNA processing</keyword>
<keyword id="KW-0820">tRNA-binding</keyword>
<evidence type="ECO:0000255" key="1">
    <source>
        <dbReference type="HAMAP-Rule" id="MF_00564"/>
    </source>
</evidence>
<gene>
    <name evidence="1" type="primary">rph</name>
    <name type="ordered locus">AZC_4289</name>
</gene>
<proteinExistence type="inferred from homology"/>
<protein>
    <recommendedName>
        <fullName evidence="1">Ribonuclease PH</fullName>
        <shortName evidence="1">RNase PH</shortName>
        <ecNumber evidence="1">2.7.7.56</ecNumber>
    </recommendedName>
    <alternativeName>
        <fullName evidence="1">tRNA nucleotidyltransferase</fullName>
    </alternativeName>
</protein>
<reference key="1">
    <citation type="submission" date="2007-04" db="EMBL/GenBank/DDBJ databases">
        <title>Complete genome sequence of the nitrogen-fixing bacterium Azorhizobium caulinodans ORS571.</title>
        <authorList>
            <person name="Lee K.B."/>
            <person name="Backer P.D."/>
            <person name="Aono T."/>
            <person name="Liu C.T."/>
            <person name="Suzuki S."/>
            <person name="Suzuki T."/>
            <person name="Kaneko T."/>
            <person name="Yamada M."/>
            <person name="Tabata S."/>
            <person name="Kupfer D.M."/>
            <person name="Najar F.Z."/>
            <person name="Wiley G.B."/>
            <person name="Roe B."/>
            <person name="Binnewies T."/>
            <person name="Ussery D."/>
            <person name="Vereecke D."/>
            <person name="Gevers D."/>
            <person name="Holsters M."/>
            <person name="Oyaizu H."/>
        </authorList>
    </citation>
    <scope>NUCLEOTIDE SEQUENCE [LARGE SCALE GENOMIC DNA]</scope>
    <source>
        <strain>ATCC 43989 / DSM 5975 / JCM 20966 / LMG 6465 / NBRC 14845 / NCIMB 13405 / ORS 571</strain>
    </source>
</reference>
<feature type="chain" id="PRO_1000072564" description="Ribonuclease PH">
    <location>
        <begin position="1"/>
        <end position="238"/>
    </location>
</feature>
<feature type="binding site" evidence="1">
    <location>
        <position position="86"/>
    </location>
    <ligand>
        <name>phosphate</name>
        <dbReference type="ChEBI" id="CHEBI:43474"/>
        <note>substrate</note>
    </ligand>
</feature>
<feature type="binding site" evidence="1">
    <location>
        <begin position="124"/>
        <end position="126"/>
    </location>
    <ligand>
        <name>phosphate</name>
        <dbReference type="ChEBI" id="CHEBI:43474"/>
        <note>substrate</note>
    </ligand>
</feature>
<name>RNPH_AZOC5</name>
<sequence length="238" mass="26105">MRPSRRANDEMRAVSFERGVLRHAEGSCLVKFGDTHVLVAATLEERLPPWLKGQGRGWVTAEYSMLPRATLERTRREATTGKQSGRTQEIQRLIGRSLRSVTDLVGLGERQITLDCDVLQADGGTRTAAITGAWVALHDCLNWMYQRSMLKTIPLKENVAAISCGIHEGTPVLDLDYAEDSKAETDANFVMTGTGGIVEIQGTAEKTPFSQDELLSLLALARKGVGELVELQKQAIKA</sequence>
<accession>A8HV93</accession>
<dbReference type="EC" id="2.7.7.56" evidence="1"/>
<dbReference type="EMBL" id="AP009384">
    <property type="protein sequence ID" value="BAF90287.1"/>
    <property type="molecule type" value="Genomic_DNA"/>
</dbReference>
<dbReference type="RefSeq" id="WP_012172809.1">
    <property type="nucleotide sequence ID" value="NC_009937.1"/>
</dbReference>
<dbReference type="SMR" id="A8HV93"/>
<dbReference type="STRING" id="438753.AZC_4289"/>
<dbReference type="KEGG" id="azc:AZC_4289"/>
<dbReference type="eggNOG" id="COG0689">
    <property type="taxonomic scope" value="Bacteria"/>
</dbReference>
<dbReference type="HOGENOM" id="CLU_050858_0_0_5"/>
<dbReference type="Proteomes" id="UP000000270">
    <property type="component" value="Chromosome"/>
</dbReference>
<dbReference type="GO" id="GO:0000175">
    <property type="term" value="F:3'-5'-RNA exonuclease activity"/>
    <property type="evidence" value="ECO:0007669"/>
    <property type="project" value="UniProtKB-UniRule"/>
</dbReference>
<dbReference type="GO" id="GO:0000049">
    <property type="term" value="F:tRNA binding"/>
    <property type="evidence" value="ECO:0007669"/>
    <property type="project" value="UniProtKB-UniRule"/>
</dbReference>
<dbReference type="GO" id="GO:0009022">
    <property type="term" value="F:tRNA nucleotidyltransferase activity"/>
    <property type="evidence" value="ECO:0007669"/>
    <property type="project" value="UniProtKB-UniRule"/>
</dbReference>
<dbReference type="GO" id="GO:0016075">
    <property type="term" value="P:rRNA catabolic process"/>
    <property type="evidence" value="ECO:0007669"/>
    <property type="project" value="UniProtKB-UniRule"/>
</dbReference>
<dbReference type="GO" id="GO:0006364">
    <property type="term" value="P:rRNA processing"/>
    <property type="evidence" value="ECO:0007669"/>
    <property type="project" value="UniProtKB-KW"/>
</dbReference>
<dbReference type="GO" id="GO:0008033">
    <property type="term" value="P:tRNA processing"/>
    <property type="evidence" value="ECO:0007669"/>
    <property type="project" value="UniProtKB-UniRule"/>
</dbReference>
<dbReference type="CDD" id="cd11362">
    <property type="entry name" value="RNase_PH_bact"/>
    <property type="match status" value="1"/>
</dbReference>
<dbReference type="FunFam" id="3.30.230.70:FF:000003">
    <property type="entry name" value="Ribonuclease PH"/>
    <property type="match status" value="1"/>
</dbReference>
<dbReference type="Gene3D" id="3.30.230.70">
    <property type="entry name" value="GHMP Kinase, N-terminal domain"/>
    <property type="match status" value="1"/>
</dbReference>
<dbReference type="HAMAP" id="MF_00564">
    <property type="entry name" value="RNase_PH"/>
    <property type="match status" value="1"/>
</dbReference>
<dbReference type="InterPro" id="IPR001247">
    <property type="entry name" value="ExoRNase_PH_dom1"/>
</dbReference>
<dbReference type="InterPro" id="IPR015847">
    <property type="entry name" value="ExoRNase_PH_dom2"/>
</dbReference>
<dbReference type="InterPro" id="IPR036345">
    <property type="entry name" value="ExoRNase_PH_dom2_sf"/>
</dbReference>
<dbReference type="InterPro" id="IPR027408">
    <property type="entry name" value="PNPase/RNase_PH_dom_sf"/>
</dbReference>
<dbReference type="InterPro" id="IPR020568">
    <property type="entry name" value="Ribosomal_Su5_D2-typ_SF"/>
</dbReference>
<dbReference type="InterPro" id="IPR050080">
    <property type="entry name" value="RNase_PH"/>
</dbReference>
<dbReference type="InterPro" id="IPR002381">
    <property type="entry name" value="RNase_PH_bac-type"/>
</dbReference>
<dbReference type="InterPro" id="IPR018336">
    <property type="entry name" value="RNase_PH_CS"/>
</dbReference>
<dbReference type="NCBIfam" id="TIGR01966">
    <property type="entry name" value="RNasePH"/>
    <property type="match status" value="1"/>
</dbReference>
<dbReference type="PANTHER" id="PTHR11953">
    <property type="entry name" value="EXOSOME COMPLEX COMPONENT"/>
    <property type="match status" value="1"/>
</dbReference>
<dbReference type="PANTHER" id="PTHR11953:SF0">
    <property type="entry name" value="EXOSOME COMPLEX COMPONENT RRP41"/>
    <property type="match status" value="1"/>
</dbReference>
<dbReference type="Pfam" id="PF01138">
    <property type="entry name" value="RNase_PH"/>
    <property type="match status" value="1"/>
</dbReference>
<dbReference type="Pfam" id="PF03725">
    <property type="entry name" value="RNase_PH_C"/>
    <property type="match status" value="1"/>
</dbReference>
<dbReference type="SUPFAM" id="SSF55666">
    <property type="entry name" value="Ribonuclease PH domain 2-like"/>
    <property type="match status" value="1"/>
</dbReference>
<dbReference type="SUPFAM" id="SSF54211">
    <property type="entry name" value="Ribosomal protein S5 domain 2-like"/>
    <property type="match status" value="1"/>
</dbReference>
<dbReference type="PROSITE" id="PS01277">
    <property type="entry name" value="RIBONUCLEASE_PH"/>
    <property type="match status" value="1"/>
</dbReference>
<organism>
    <name type="scientific">Azorhizobium caulinodans (strain ATCC 43989 / DSM 5975 / JCM 20966 / LMG 6465 / NBRC 14845 / NCIMB 13405 / ORS 571)</name>
    <dbReference type="NCBI Taxonomy" id="438753"/>
    <lineage>
        <taxon>Bacteria</taxon>
        <taxon>Pseudomonadati</taxon>
        <taxon>Pseudomonadota</taxon>
        <taxon>Alphaproteobacteria</taxon>
        <taxon>Hyphomicrobiales</taxon>
        <taxon>Xanthobacteraceae</taxon>
        <taxon>Azorhizobium</taxon>
    </lineage>
</organism>